<proteinExistence type="evidence at protein level"/>
<protein>
    <recommendedName>
        <fullName>WAS/WASL-interacting protein family member 3</fullName>
    </recommendedName>
    <alternativeName>
        <fullName>Corticosteroids and regional expression protein 16 homolog</fullName>
    </alternativeName>
</protein>
<sequence length="485" mass="49453">MPVPPPPPPPPPPPPPPPPPLGAPPPPPLGAPPPPPPPGPPVSTDTPSLRKPDLKGRSALLADIQQGTRLRKVTQINDRSAPQIEGSKGTSKEGGAAGSNARGGNTPPALGDLFAGGFPVLRPAGQRDVSGGKSGQGPGSRAPSPRLPIKAISGPLPAPASPRLGNASETHSSARPVPPRPSVPAPPPPTPPPPPPPPLPPASPIKAQLVSPPAPPTKVNPSVVPPPLPCAPPLPPPPPTPPPLPPASALSDKAVRPQLAPLHLPPIPPPLPLLPPCGYPGLHSEPNSPAQEVREPPAPPPPPPPPPPPPLPTYASCSSRTAVAPPPLPGANNSGSETPPPLPPKSPSFQTQKALPTPPGAPGPQAILQKKRRGPGTSGGKLNPPPAPPARSPTTELSSKSQQPGGQLRNGGQHAIDDFESKFTFHSMEDFPPPDEYKPCQKIYPSKVPRSRTPGSWLQAEAAGQSSDDIKSRNSQLSLKALPVR</sequence>
<accession>P0C7L0</accession>
<dbReference type="EMBL" id="AC087841">
    <property type="status" value="NOT_ANNOTATED_CDS"/>
    <property type="molecule type" value="Genomic_DNA"/>
</dbReference>
<dbReference type="EMBL" id="BQ952480">
    <property type="status" value="NOT_ANNOTATED_CDS"/>
    <property type="molecule type" value="mRNA"/>
</dbReference>
<dbReference type="EMBL" id="CB723002">
    <property type="status" value="NOT_ANNOTATED_CDS"/>
    <property type="molecule type" value="mRNA"/>
</dbReference>
<dbReference type="FunCoup" id="P0C7L0">
    <property type="interactions" value="56"/>
</dbReference>
<dbReference type="STRING" id="10090.ENSMUSP00000120240"/>
<dbReference type="GlyGen" id="P0C7L0">
    <property type="glycosylation" value="4 sites, 1 N-linked glycan (1 site)"/>
</dbReference>
<dbReference type="iPTMnet" id="P0C7L0"/>
<dbReference type="PhosphoSitePlus" id="P0C7L0"/>
<dbReference type="SwissPalm" id="P0C7L0"/>
<dbReference type="PaxDb" id="10090-ENSMUSP00000120240"/>
<dbReference type="ProteomicsDB" id="297847">
    <molecule id="P0C7L0-1"/>
</dbReference>
<dbReference type="ProteomicsDB" id="297848">
    <molecule id="P0C7L0-2"/>
</dbReference>
<dbReference type="AGR" id="MGI:3044681"/>
<dbReference type="MGI" id="MGI:3044681">
    <property type="gene designation" value="Wipf3"/>
</dbReference>
<dbReference type="eggNOG" id="KOG4462">
    <property type="taxonomic scope" value="Eukaryota"/>
</dbReference>
<dbReference type="InParanoid" id="P0C7L0"/>
<dbReference type="PhylomeDB" id="P0C7L0"/>
<dbReference type="Reactome" id="R-MMU-2029482">
    <property type="pathway name" value="Regulation of actin dynamics for phagocytic cup formation"/>
</dbReference>
<dbReference type="Reactome" id="R-MMU-5663213">
    <property type="pathway name" value="RHO GTPases Activate WASPs and WAVEs"/>
</dbReference>
<dbReference type="ChiTaRS" id="Wipf3">
    <property type="organism name" value="mouse"/>
</dbReference>
<dbReference type="PRO" id="PR:P0C7L0"/>
<dbReference type="Proteomes" id="UP000000589">
    <property type="component" value="Unplaced"/>
</dbReference>
<dbReference type="RNAct" id="P0C7L0">
    <property type="molecule type" value="protein"/>
</dbReference>
<dbReference type="GO" id="GO:0005769">
    <property type="term" value="C:early endosome"/>
    <property type="evidence" value="ECO:0007669"/>
    <property type="project" value="InterPro"/>
</dbReference>
<dbReference type="GO" id="GO:0045202">
    <property type="term" value="C:synapse"/>
    <property type="evidence" value="ECO:0000314"/>
    <property type="project" value="SynGO"/>
</dbReference>
<dbReference type="GO" id="GO:0071203">
    <property type="term" value="C:WASH complex"/>
    <property type="evidence" value="ECO:0007669"/>
    <property type="project" value="InterPro"/>
</dbReference>
<dbReference type="GO" id="GO:0003779">
    <property type="term" value="F:actin binding"/>
    <property type="evidence" value="ECO:0007669"/>
    <property type="project" value="UniProtKB-KW"/>
</dbReference>
<dbReference type="GO" id="GO:0043014">
    <property type="term" value="F:alpha-tubulin binding"/>
    <property type="evidence" value="ECO:0007669"/>
    <property type="project" value="InterPro"/>
</dbReference>
<dbReference type="GO" id="GO:0034314">
    <property type="term" value="P:Arp2/3 complex-mediated actin nucleation"/>
    <property type="evidence" value="ECO:0007669"/>
    <property type="project" value="InterPro"/>
</dbReference>
<dbReference type="GO" id="GO:0030154">
    <property type="term" value="P:cell differentiation"/>
    <property type="evidence" value="ECO:0007669"/>
    <property type="project" value="UniProtKB-KW"/>
</dbReference>
<dbReference type="GO" id="GO:0007283">
    <property type="term" value="P:spermatogenesis"/>
    <property type="evidence" value="ECO:0007669"/>
    <property type="project" value="UniProtKB-KW"/>
</dbReference>
<dbReference type="CDD" id="cd22077">
    <property type="entry name" value="WH2_WAS_WASL-2_3"/>
    <property type="match status" value="1"/>
</dbReference>
<dbReference type="InterPro" id="IPR028290">
    <property type="entry name" value="WASH1"/>
</dbReference>
<dbReference type="InterPro" id="IPR003124">
    <property type="entry name" value="WH2_dom"/>
</dbReference>
<dbReference type="PANTHER" id="PTHR23331">
    <property type="entry name" value="CXYORF1"/>
    <property type="match status" value="1"/>
</dbReference>
<dbReference type="PANTHER" id="PTHR23331:SF4">
    <property type="entry name" value="WAS_WASL-INTERACTING PROTEIN FAMILY MEMBER 3"/>
    <property type="match status" value="1"/>
</dbReference>
<dbReference type="Pfam" id="PF02205">
    <property type="entry name" value="WH2"/>
    <property type="match status" value="1"/>
</dbReference>
<dbReference type="SMART" id="SM00246">
    <property type="entry name" value="WH2"/>
    <property type="match status" value="1"/>
</dbReference>
<dbReference type="PROSITE" id="PS51082">
    <property type="entry name" value="WH2"/>
    <property type="match status" value="1"/>
</dbReference>
<keyword id="KW-0009">Actin-binding</keyword>
<keyword id="KW-0025">Alternative splicing</keyword>
<keyword id="KW-0963">Cytoplasm</keyword>
<keyword id="KW-0217">Developmental protein</keyword>
<keyword id="KW-0221">Differentiation</keyword>
<keyword id="KW-0488">Methylation</keyword>
<keyword id="KW-0597">Phosphoprotein</keyword>
<keyword id="KW-1185">Reference proteome</keyword>
<keyword id="KW-0744">Spermatogenesis</keyword>
<organism>
    <name type="scientific">Mus musculus</name>
    <name type="common">Mouse</name>
    <dbReference type="NCBI Taxonomy" id="10090"/>
    <lineage>
        <taxon>Eukaryota</taxon>
        <taxon>Metazoa</taxon>
        <taxon>Chordata</taxon>
        <taxon>Craniata</taxon>
        <taxon>Vertebrata</taxon>
        <taxon>Euteleostomi</taxon>
        <taxon>Mammalia</taxon>
        <taxon>Eutheria</taxon>
        <taxon>Euarchontoglires</taxon>
        <taxon>Glires</taxon>
        <taxon>Rodentia</taxon>
        <taxon>Myomorpha</taxon>
        <taxon>Muroidea</taxon>
        <taxon>Muridae</taxon>
        <taxon>Murinae</taxon>
        <taxon>Mus</taxon>
        <taxon>Mus</taxon>
    </lineage>
</organism>
<reference key="1">
    <citation type="journal article" date="2007" name="Genes Cells">
        <title>Male-specific sterility caused by the loss of CR16.</title>
        <authorList>
            <person name="Suetsugu S."/>
            <person name="Banzai Y."/>
            <person name="Kato M."/>
            <person name="Fukami K."/>
            <person name="Kataoka Y."/>
            <person name="Takai Y."/>
            <person name="Yoshida N."/>
            <person name="Takenawa T."/>
        </authorList>
    </citation>
    <scope>NUCLEOTIDE SEQUENCE [MRNA] (ISOFORMS 1 AND 2)</scope>
    <scope>FUNCTION</scope>
    <scope>SUBCELLULAR LOCATION</scope>
    <scope>DISRUPTION PHENOTYPE</scope>
    <scope>TISSUE SPECIFICITY</scope>
</reference>
<reference key="2">
    <citation type="journal article" date="2009" name="PLoS Biol.">
        <title>Lineage-specific biology revealed by a finished genome assembly of the mouse.</title>
        <authorList>
            <person name="Church D.M."/>
            <person name="Goodstadt L."/>
            <person name="Hillier L.W."/>
            <person name="Zody M.C."/>
            <person name="Goldstein S."/>
            <person name="She X."/>
            <person name="Bult C.J."/>
            <person name="Agarwala R."/>
            <person name="Cherry J.L."/>
            <person name="DiCuccio M."/>
            <person name="Hlavina W."/>
            <person name="Kapustin Y."/>
            <person name="Meric P."/>
            <person name="Maglott D."/>
            <person name="Birtle Z."/>
            <person name="Marques A.C."/>
            <person name="Graves T."/>
            <person name="Zhou S."/>
            <person name="Teague B."/>
            <person name="Potamousis K."/>
            <person name="Churas C."/>
            <person name="Place M."/>
            <person name="Herschleb J."/>
            <person name="Runnheim R."/>
            <person name="Forrest D."/>
            <person name="Amos-Landgraf J."/>
            <person name="Schwartz D.C."/>
            <person name="Cheng Z."/>
            <person name="Lindblad-Toh K."/>
            <person name="Eichler E.E."/>
            <person name="Ponting C.P."/>
        </authorList>
    </citation>
    <scope>NUCLEOTIDE SEQUENCE [LARGE SCALE GENOMIC DNA]</scope>
    <source>
        <strain>C57BL/6J</strain>
    </source>
</reference>
<reference key="3">
    <citation type="journal article" date="2004" name="Genome Res.">
        <title>The status, quality, and expansion of the NIH full-length cDNA project: the Mammalian Gene Collection (MGC).</title>
        <authorList>
            <consortium name="The MGC Project Team"/>
        </authorList>
    </citation>
    <scope>NUCLEOTIDE SEQUENCE [LARGE SCALE MRNA] OF 1-68 AND 203-485</scope>
    <source>
        <tissue>Brain</tissue>
        <tissue>Mammary tumor</tissue>
    </source>
</reference>
<reference key="4">
    <citation type="journal article" date="2010" name="Cell">
        <title>A tissue-specific atlas of mouse protein phosphorylation and expression.</title>
        <authorList>
            <person name="Huttlin E.L."/>
            <person name="Jedrychowski M.P."/>
            <person name="Elias J.E."/>
            <person name="Goswami T."/>
            <person name="Rad R."/>
            <person name="Beausoleil S.A."/>
            <person name="Villen J."/>
            <person name="Haas W."/>
            <person name="Sowa M.E."/>
            <person name="Gygi S.P."/>
        </authorList>
    </citation>
    <scope>PHOSPHORYLATION [LARGE SCALE ANALYSIS] AT SER-161</scope>
    <scope>IDENTIFICATION BY MASS SPECTROMETRY [LARGE SCALE ANALYSIS]</scope>
    <source>
        <tissue>Brain</tissue>
        <tissue>Heart</tissue>
        <tissue>Testis</tissue>
    </source>
</reference>
<reference key="5">
    <citation type="journal article" date="2014" name="Mol. Cell. Proteomics">
        <title>Immunoaffinity enrichment and mass spectrometry analysis of protein methylation.</title>
        <authorList>
            <person name="Guo A."/>
            <person name="Gu H."/>
            <person name="Zhou J."/>
            <person name="Mulhern D."/>
            <person name="Wang Y."/>
            <person name="Lee K.A."/>
            <person name="Yang V."/>
            <person name="Aguiar M."/>
            <person name="Kornhauser J."/>
            <person name="Jia X."/>
            <person name="Ren J."/>
            <person name="Beausoleil S.A."/>
            <person name="Silva J.C."/>
            <person name="Vemulapalli V."/>
            <person name="Bedford M.T."/>
            <person name="Comb M.J."/>
        </authorList>
    </citation>
    <scope>METHYLATION [LARGE SCALE ANALYSIS] AT ARG-57</scope>
    <scope>IDENTIFICATION BY MASS SPECTROMETRY [LARGE SCALE ANALYSIS]</scope>
    <source>
        <tissue>Brain</tissue>
        <tissue>Embryo</tissue>
    </source>
</reference>
<comment type="function">
    <text evidence="5 7">May be a regulator of cytoskeletal organization (Potential). May have a role in spermatogenesis.</text>
</comment>
<comment type="subunit">
    <text evidence="1">Interacts with WASL, and monomeric and filamentous actin.</text>
</comment>
<comment type="subcellular location">
    <subcellularLocation>
        <location evidence="5">Cytoplasm</location>
    </subcellularLocation>
    <text evidence="1">In hippocampal neurons colocalizes with WASL in the cell body, axons and the growth cone (By similarity). Localizes to the actin filaments at the Sertoli cell-spermatid junctions.</text>
</comment>
<comment type="alternative products">
    <event type="alternative splicing"/>
    <isoform>
        <id>P0C7L0-1</id>
        <name>1</name>
        <sequence type="displayed"/>
    </isoform>
    <isoform>
        <id>P0C7L0-2</id>
        <name>2</name>
        <name>deltains</name>
        <sequence type="described" ref="VSP_034030"/>
    </isoform>
</comment>
<comment type="tissue specificity">
    <text evidence="5">Isoform 1 is expressed in brain and testis and isoform 2 is expressed only in brain (at protein level).</text>
</comment>
<comment type="domain">
    <text evidence="1">The WH2 domain is found in a number of putative actin-binding proteins.</text>
</comment>
<comment type="domain">
    <text evidence="1">The profilin-binding motif has been implicated in the interaction with profilin and SH3 domains.</text>
</comment>
<comment type="domain">
    <text evidence="1">The KLKR motif is essential for G-actin binding and for actin polymerization.</text>
</comment>
<comment type="disruption phenotype">
    <text evidence="5">Mice are normal but males are sterile due to defects in spermatogenesis.</text>
</comment>
<comment type="sequence caution" evidence="7">
    <conflict type="frameshift">
        <sequence resource="EMBL" id="CB723002"/>
    </conflict>
</comment>
<gene>
    <name type="primary">Wipf3</name>
    <name type="synonym">Cr16</name>
</gene>
<evidence type="ECO:0000250" key="1"/>
<evidence type="ECO:0000250" key="2">
    <source>
        <dbReference type="UniProtKB" id="A6NGB9"/>
    </source>
</evidence>
<evidence type="ECO:0000255" key="3">
    <source>
        <dbReference type="PROSITE-ProRule" id="PRU00406"/>
    </source>
</evidence>
<evidence type="ECO:0000256" key="4">
    <source>
        <dbReference type="SAM" id="MobiDB-lite"/>
    </source>
</evidence>
<evidence type="ECO:0000269" key="5">
    <source>
    </source>
</evidence>
<evidence type="ECO:0000303" key="6">
    <source>
    </source>
</evidence>
<evidence type="ECO:0000305" key="7"/>
<evidence type="ECO:0007744" key="8">
    <source>
    </source>
</evidence>
<evidence type="ECO:0007744" key="9">
    <source>
    </source>
</evidence>
<name>WIPF3_MOUSE</name>
<feature type="chain" id="PRO_0000337998" description="WAS/WASL-interacting protein family member 3">
    <location>
        <begin position="1"/>
        <end position="485"/>
    </location>
</feature>
<feature type="domain" description="WH2" evidence="3">
    <location>
        <begin position="56"/>
        <end position="73"/>
    </location>
</feature>
<feature type="region of interest" description="Disordered" evidence="4">
    <location>
        <begin position="1"/>
        <end position="485"/>
    </location>
</feature>
<feature type="short sequence motif" description="Profilin-binding motif">
    <location>
        <begin position="3"/>
        <end position="8"/>
    </location>
</feature>
<feature type="short sequence motif" description="Profilin-binding motif">
    <location>
        <begin position="11"/>
        <end position="16"/>
    </location>
</feature>
<feature type="short sequence motif" description="Profilin-binding motif">
    <location>
        <begin position="31"/>
        <end position="36"/>
    </location>
</feature>
<feature type="short sequence motif" description="RLRK">
    <location>
        <begin position="69"/>
        <end position="72"/>
    </location>
</feature>
<feature type="short sequence motif" description="WASP-binding motif">
    <location>
        <begin position="424"/>
        <end position="448"/>
    </location>
</feature>
<feature type="compositionally biased region" description="Pro residues" evidence="4">
    <location>
        <begin position="1"/>
        <end position="41"/>
    </location>
</feature>
<feature type="compositionally biased region" description="Pro residues" evidence="4">
    <location>
        <begin position="176"/>
        <end position="203"/>
    </location>
</feature>
<feature type="compositionally biased region" description="Pro residues" evidence="4">
    <location>
        <begin position="212"/>
        <end position="246"/>
    </location>
</feature>
<feature type="compositionally biased region" description="Low complexity" evidence="4">
    <location>
        <begin position="247"/>
        <end position="262"/>
    </location>
</feature>
<feature type="compositionally biased region" description="Pro residues" evidence="4">
    <location>
        <begin position="263"/>
        <end position="278"/>
    </location>
</feature>
<feature type="compositionally biased region" description="Pro residues" evidence="4">
    <location>
        <begin position="296"/>
        <end position="312"/>
    </location>
</feature>
<feature type="compositionally biased region" description="Polar residues" evidence="4">
    <location>
        <begin position="392"/>
        <end position="405"/>
    </location>
</feature>
<feature type="compositionally biased region" description="Basic and acidic residues" evidence="4">
    <location>
        <begin position="415"/>
        <end position="439"/>
    </location>
</feature>
<feature type="modified residue" description="Asymmetric dimethylarginine" evidence="9">
    <location>
        <position position="57"/>
    </location>
</feature>
<feature type="modified residue" description="Phosphoserine" evidence="8">
    <location>
        <position position="161"/>
    </location>
</feature>
<feature type="modified residue" description="Phosphoserine" evidence="2">
    <location>
        <position position="211"/>
    </location>
</feature>
<feature type="modified residue" description="Phosphoserine" evidence="2">
    <location>
        <position position="392"/>
    </location>
</feature>
<feature type="splice variant" id="VSP_034030" description="In isoform 2." evidence="6">
    <original>DDFESKFTFHSMEDFPPPDEYKPCQKIYPSKVPRS</original>
    <variation>G</variation>
    <location>
        <begin position="417"/>
        <end position="451"/>
    </location>
</feature>
<feature type="sequence conflict" description="In Ref. 1." evidence="7" ref="1">
    <original>L</original>
    <variation>LPV</variation>
    <location>
        <position position="482"/>
    </location>
</feature>